<evidence type="ECO:0000305" key="1"/>
<comment type="function">
    <text>Involved in the biosynthesis of amylovoran which functions as a virulence factor.</text>
</comment>
<comment type="pathway">
    <text>Glycan metabolism; exopolysaccharide biosynthesis.</text>
</comment>
<comment type="similarity">
    <text evidence="1">Belongs to the glycosyltransferase 2 family.</text>
</comment>
<accession>Q46635</accession>
<proteinExistence type="inferred from homology"/>
<feature type="chain" id="PRO_0000059180" description="Amylovoran biosynthesis glycosyltransferase AmsE">
    <location>
        <begin position="1"/>
        <end position="266"/>
    </location>
</feature>
<gene>
    <name type="primary">amsE</name>
</gene>
<organism>
    <name type="scientific">Erwinia amylovora</name>
    <name type="common">Fire blight bacteria</name>
    <dbReference type="NCBI Taxonomy" id="552"/>
    <lineage>
        <taxon>Bacteria</taxon>
        <taxon>Pseudomonadati</taxon>
        <taxon>Pseudomonadota</taxon>
        <taxon>Gammaproteobacteria</taxon>
        <taxon>Enterobacterales</taxon>
        <taxon>Erwiniaceae</taxon>
        <taxon>Erwinia</taxon>
    </lineage>
</organism>
<sequence length="266" mass="30747">MFSVLISLYNKEKPENLEQCLESLHQQTLNADEIVLVYDGPVSESLKAVATRWANLLPLVIVPLEKNLGLGKALNAGLERCTHNVVARMDTDDICLPERFEKQISYMESHPEVVLSGAAVIEFDEHGKERLKRLPLSNNDIHQFARMKNPFNHMCVVFRKDKVISAGSYQHHLYMEDYNLWLRIMSLGHPVANLPDVLMKVRAGSDMVNKRRGWNYIKSEVQLYRLKLALKQTGFIRGTLYFLIRTMTRLMPVKVMQFLYEKDRKG</sequence>
<protein>
    <recommendedName>
        <fullName>Amylovoran biosynthesis glycosyltransferase AmsE</fullName>
        <ecNumber>2.4.-.-</ecNumber>
    </recommendedName>
</protein>
<keyword id="KW-0270">Exopolysaccharide synthesis</keyword>
<keyword id="KW-0328">Glycosyltransferase</keyword>
<keyword id="KW-0808">Transferase</keyword>
<keyword id="KW-0843">Virulence</keyword>
<name>AMSE_ERWAM</name>
<reference key="1">
    <citation type="journal article" date="1995" name="Mol. Microbiol.">
        <title>Molecular analysis of the ams operon required for exopolysaccharide synthesis of Erwinia amylovora.</title>
        <authorList>
            <person name="Bugert P."/>
            <person name="Geider K."/>
        </authorList>
    </citation>
    <scope>NUCLEOTIDE SEQUENCE [GENOMIC DNA]</scope>
    <source>
        <strain>EA1/79</strain>
    </source>
</reference>
<reference key="2">
    <citation type="submission" date="2011-08" db="EMBL/GenBank/DDBJ databases">
        <authorList>
            <person name="Geider K.K."/>
        </authorList>
    </citation>
    <scope>SEQUENCE REVISION TO 143</scope>
</reference>
<dbReference type="EC" id="2.4.-.-"/>
<dbReference type="EMBL" id="X77921">
    <property type="protein sequence ID" value="CAA54886.2"/>
    <property type="molecule type" value="Genomic_DNA"/>
</dbReference>
<dbReference type="PIR" id="S61898">
    <property type="entry name" value="S61898"/>
</dbReference>
<dbReference type="RefSeq" id="WP_004158319.1">
    <property type="nucleotide sequence ID" value="NZ_RQKG01000006.1"/>
</dbReference>
<dbReference type="SMR" id="Q46635"/>
<dbReference type="CAZy" id="GT2">
    <property type="family name" value="Glycosyltransferase Family 2"/>
</dbReference>
<dbReference type="OMA" id="MTVAYQK"/>
<dbReference type="UniPathway" id="UPA00631"/>
<dbReference type="GO" id="GO:0016757">
    <property type="term" value="F:glycosyltransferase activity"/>
    <property type="evidence" value="ECO:0007669"/>
    <property type="project" value="UniProtKB-KW"/>
</dbReference>
<dbReference type="GO" id="GO:0000271">
    <property type="term" value="P:polysaccharide biosynthetic process"/>
    <property type="evidence" value="ECO:0007669"/>
    <property type="project" value="UniProtKB-KW"/>
</dbReference>
<dbReference type="CDD" id="cd04195">
    <property type="entry name" value="GT2_AmsE_like"/>
    <property type="match status" value="1"/>
</dbReference>
<dbReference type="Gene3D" id="3.90.550.10">
    <property type="entry name" value="Spore Coat Polysaccharide Biosynthesis Protein SpsA, Chain A"/>
    <property type="match status" value="1"/>
</dbReference>
<dbReference type="InterPro" id="IPR001173">
    <property type="entry name" value="Glyco_trans_2-like"/>
</dbReference>
<dbReference type="InterPro" id="IPR050834">
    <property type="entry name" value="Glycosyltransf_2"/>
</dbReference>
<dbReference type="InterPro" id="IPR029044">
    <property type="entry name" value="Nucleotide-diphossugar_trans"/>
</dbReference>
<dbReference type="PANTHER" id="PTHR43685">
    <property type="entry name" value="GLYCOSYLTRANSFERASE"/>
    <property type="match status" value="1"/>
</dbReference>
<dbReference type="PANTHER" id="PTHR43685:SF5">
    <property type="entry name" value="GLYCOSYLTRANSFERASE EPSE-RELATED"/>
    <property type="match status" value="1"/>
</dbReference>
<dbReference type="Pfam" id="PF00535">
    <property type="entry name" value="Glycos_transf_2"/>
    <property type="match status" value="1"/>
</dbReference>
<dbReference type="SUPFAM" id="SSF53448">
    <property type="entry name" value="Nucleotide-diphospho-sugar transferases"/>
    <property type="match status" value="1"/>
</dbReference>